<protein>
    <recommendedName>
        <fullName evidence="1">Urease subunit beta</fullName>
        <ecNumber evidence="1">3.5.1.5</ecNumber>
    </recommendedName>
    <alternativeName>
        <fullName evidence="1">Urea amidohydrolase subunit beta</fullName>
    </alternativeName>
</protein>
<evidence type="ECO:0000255" key="1">
    <source>
        <dbReference type="HAMAP-Rule" id="MF_01954"/>
    </source>
</evidence>
<reference key="1">
    <citation type="submission" date="2008-01" db="EMBL/GenBank/DDBJ databases">
        <title>Complete sequence of Shewanella halifaxensis HAW-EB4.</title>
        <authorList>
            <consortium name="US DOE Joint Genome Institute"/>
            <person name="Copeland A."/>
            <person name="Lucas S."/>
            <person name="Lapidus A."/>
            <person name="Glavina del Rio T."/>
            <person name="Dalin E."/>
            <person name="Tice H."/>
            <person name="Bruce D."/>
            <person name="Goodwin L."/>
            <person name="Pitluck S."/>
            <person name="Sims D."/>
            <person name="Brettin T."/>
            <person name="Detter J.C."/>
            <person name="Han C."/>
            <person name="Kuske C.R."/>
            <person name="Schmutz J."/>
            <person name="Larimer F."/>
            <person name="Land M."/>
            <person name="Hauser L."/>
            <person name="Kyrpides N."/>
            <person name="Kim E."/>
            <person name="Zhao J.-S."/>
            <person name="Richardson P."/>
        </authorList>
    </citation>
    <scope>NUCLEOTIDE SEQUENCE [LARGE SCALE GENOMIC DNA]</scope>
    <source>
        <strain>HAW-EB4</strain>
    </source>
</reference>
<feature type="chain" id="PRO_1000088509" description="Urease subunit beta">
    <location>
        <begin position="1"/>
        <end position="105"/>
    </location>
</feature>
<accession>B0TT70</accession>
<comment type="catalytic activity">
    <reaction evidence="1">
        <text>urea + 2 H2O + H(+) = hydrogencarbonate + 2 NH4(+)</text>
        <dbReference type="Rhea" id="RHEA:20557"/>
        <dbReference type="ChEBI" id="CHEBI:15377"/>
        <dbReference type="ChEBI" id="CHEBI:15378"/>
        <dbReference type="ChEBI" id="CHEBI:16199"/>
        <dbReference type="ChEBI" id="CHEBI:17544"/>
        <dbReference type="ChEBI" id="CHEBI:28938"/>
        <dbReference type="EC" id="3.5.1.5"/>
    </reaction>
</comment>
<comment type="pathway">
    <text evidence="1">Nitrogen metabolism; urea degradation; CO(2) and NH(3) from urea (urease route): step 1/1.</text>
</comment>
<comment type="subunit">
    <text evidence="1">Heterotrimer of UreA (gamma), UreB (beta) and UreC (alpha) subunits. Three heterotrimers associate to form the active enzyme.</text>
</comment>
<comment type="subcellular location">
    <subcellularLocation>
        <location evidence="1">Cytoplasm</location>
    </subcellularLocation>
</comment>
<comment type="similarity">
    <text evidence="1">Belongs to the urease beta subunit family.</text>
</comment>
<keyword id="KW-0963">Cytoplasm</keyword>
<keyword id="KW-0378">Hydrolase</keyword>
<name>URE2_SHEHH</name>
<sequence>MIPGEIIVNKALGEIELNQGYDKYTLSVANIGDRPIQVGSHYHFYEVNEFLSFDREPTLGFRLDIPAGMAVRFEPGQSRTVELVAYSGKRIIQGFDGKVMGKIKE</sequence>
<gene>
    <name evidence="1" type="primary">ureB</name>
    <name type="ordered locus">Shal_3466</name>
</gene>
<proteinExistence type="inferred from homology"/>
<dbReference type="EC" id="3.5.1.5" evidence="1"/>
<dbReference type="EMBL" id="CP000931">
    <property type="protein sequence ID" value="ABZ78011.1"/>
    <property type="molecule type" value="Genomic_DNA"/>
</dbReference>
<dbReference type="RefSeq" id="WP_012278531.1">
    <property type="nucleotide sequence ID" value="NC_010334.1"/>
</dbReference>
<dbReference type="SMR" id="B0TT70"/>
<dbReference type="STRING" id="458817.Shal_3466"/>
<dbReference type="KEGG" id="shl:Shal_3466"/>
<dbReference type="eggNOG" id="COG0832">
    <property type="taxonomic scope" value="Bacteria"/>
</dbReference>
<dbReference type="HOGENOM" id="CLU_129707_1_1_6"/>
<dbReference type="OrthoDB" id="9797217at2"/>
<dbReference type="UniPathway" id="UPA00258">
    <property type="reaction ID" value="UER00370"/>
</dbReference>
<dbReference type="Proteomes" id="UP000001317">
    <property type="component" value="Chromosome"/>
</dbReference>
<dbReference type="GO" id="GO:0035550">
    <property type="term" value="C:urease complex"/>
    <property type="evidence" value="ECO:0007669"/>
    <property type="project" value="InterPro"/>
</dbReference>
<dbReference type="GO" id="GO:0009039">
    <property type="term" value="F:urease activity"/>
    <property type="evidence" value="ECO:0007669"/>
    <property type="project" value="UniProtKB-UniRule"/>
</dbReference>
<dbReference type="GO" id="GO:0043419">
    <property type="term" value="P:urea catabolic process"/>
    <property type="evidence" value="ECO:0007669"/>
    <property type="project" value="UniProtKB-UniRule"/>
</dbReference>
<dbReference type="CDD" id="cd00407">
    <property type="entry name" value="Urease_beta"/>
    <property type="match status" value="1"/>
</dbReference>
<dbReference type="Gene3D" id="2.10.150.10">
    <property type="entry name" value="Urease, beta subunit"/>
    <property type="match status" value="1"/>
</dbReference>
<dbReference type="HAMAP" id="MF_01954">
    <property type="entry name" value="Urease_beta"/>
    <property type="match status" value="1"/>
</dbReference>
<dbReference type="InterPro" id="IPR002019">
    <property type="entry name" value="Urease_beta-like"/>
</dbReference>
<dbReference type="InterPro" id="IPR036461">
    <property type="entry name" value="Urease_betasu_sf"/>
</dbReference>
<dbReference type="InterPro" id="IPR050069">
    <property type="entry name" value="Urease_subunit"/>
</dbReference>
<dbReference type="NCBIfam" id="NF009682">
    <property type="entry name" value="PRK13203.1"/>
    <property type="match status" value="1"/>
</dbReference>
<dbReference type="NCBIfam" id="TIGR00192">
    <property type="entry name" value="urease_beta"/>
    <property type="match status" value="1"/>
</dbReference>
<dbReference type="PANTHER" id="PTHR33569">
    <property type="entry name" value="UREASE"/>
    <property type="match status" value="1"/>
</dbReference>
<dbReference type="PANTHER" id="PTHR33569:SF1">
    <property type="entry name" value="UREASE"/>
    <property type="match status" value="1"/>
</dbReference>
<dbReference type="Pfam" id="PF00699">
    <property type="entry name" value="Urease_beta"/>
    <property type="match status" value="1"/>
</dbReference>
<dbReference type="SUPFAM" id="SSF51278">
    <property type="entry name" value="Urease, beta-subunit"/>
    <property type="match status" value="1"/>
</dbReference>
<organism>
    <name type="scientific">Shewanella halifaxensis (strain HAW-EB4)</name>
    <dbReference type="NCBI Taxonomy" id="458817"/>
    <lineage>
        <taxon>Bacteria</taxon>
        <taxon>Pseudomonadati</taxon>
        <taxon>Pseudomonadota</taxon>
        <taxon>Gammaproteobacteria</taxon>
        <taxon>Alteromonadales</taxon>
        <taxon>Shewanellaceae</taxon>
        <taxon>Shewanella</taxon>
    </lineage>
</organism>